<dbReference type="EMBL" id="U31961">
    <property type="protein sequence ID" value="AAA84402.1"/>
    <property type="molecule type" value="Genomic_DNA"/>
</dbReference>
<dbReference type="EMBL" id="U31961">
    <property type="protein sequence ID" value="AAA84403.1"/>
    <property type="molecule type" value="Genomic_DNA"/>
</dbReference>
<dbReference type="EMBL" id="M21173">
    <property type="protein sequence ID" value="AAA28400.1"/>
    <property type="molecule type" value="mRNA"/>
</dbReference>
<dbReference type="EMBL" id="X16134">
    <property type="protein sequence ID" value="CAA34260.1"/>
    <property type="molecule type" value="mRNA"/>
</dbReference>
<dbReference type="EMBL" id="X51663">
    <property type="protein sequence ID" value="CAB57859.1"/>
    <property type="molecule type" value="mRNA"/>
</dbReference>
<dbReference type="EMBL" id="AE014297">
    <property type="protein sequence ID" value="AAF55362.1"/>
    <property type="molecule type" value="Genomic_DNA"/>
</dbReference>
<dbReference type="EMBL" id="AE014297">
    <property type="protein sequence ID" value="AAF55363.1"/>
    <property type="molecule type" value="Genomic_DNA"/>
</dbReference>
<dbReference type="EMBL" id="X15080">
    <property type="protein sequence ID" value="CAA33187.1"/>
    <property type="molecule type" value="mRNA"/>
</dbReference>
<dbReference type="PIR" id="A32584">
    <property type="entry name" value="A32584"/>
</dbReference>
<dbReference type="PIR" id="A34220">
    <property type="entry name" value="A34220"/>
</dbReference>
<dbReference type="PIR" id="B24780">
    <property type="entry name" value="B24780"/>
</dbReference>
<dbReference type="RefSeq" id="NP_001303471.1">
    <molecule id="P09087-2"/>
    <property type="nucleotide sequence ID" value="NM_001316542.1"/>
</dbReference>
<dbReference type="RefSeq" id="NP_001303472.1">
    <molecule id="P09087-1"/>
    <property type="nucleotide sequence ID" value="NM_001316543.1"/>
</dbReference>
<dbReference type="RefSeq" id="NP_001303474.1">
    <molecule id="P09087-2"/>
    <property type="nucleotide sequence ID" value="NM_001316545.1"/>
</dbReference>
<dbReference type="RefSeq" id="NP_524896.2">
    <molecule id="P09087-1"/>
    <property type="nucleotide sequence ID" value="NM_080157.3"/>
</dbReference>
<dbReference type="RefSeq" id="NP_650577.1">
    <molecule id="P09087-2"/>
    <property type="nucleotide sequence ID" value="NM_142320.2"/>
</dbReference>
<dbReference type="RefSeq" id="NP_732180.1">
    <molecule id="P09087-2"/>
    <property type="nucleotide sequence ID" value="NM_169735.2"/>
</dbReference>
<dbReference type="RefSeq" id="NP_732181.1">
    <molecule id="P09087-2"/>
    <property type="nucleotide sequence ID" value="NM_169736.2"/>
</dbReference>
<dbReference type="RefSeq" id="NP_996220.1">
    <molecule id="P09087-2"/>
    <property type="nucleotide sequence ID" value="NM_206498.2"/>
</dbReference>
<dbReference type="PDB" id="5ZJQ">
    <property type="method" value="X-ray"/>
    <property type="resolution" value="2.44 A"/>
    <property type="chains" value="A=369-452"/>
</dbReference>
<dbReference type="PDB" id="5ZJR">
    <property type="method" value="X-ray"/>
    <property type="resolution" value="3.03 A"/>
    <property type="chains" value="A=369-452"/>
</dbReference>
<dbReference type="PDB" id="5ZJS">
    <property type="method" value="X-ray"/>
    <property type="resolution" value="2.90 A"/>
    <property type="chains" value="A=369-452"/>
</dbReference>
<dbReference type="PDB" id="5ZJT">
    <property type="method" value="X-ray"/>
    <property type="resolution" value="2.40 A"/>
    <property type="chains" value="A/E=369-452"/>
</dbReference>
<dbReference type="PDBsum" id="5ZJQ"/>
<dbReference type="PDBsum" id="5ZJR"/>
<dbReference type="PDBsum" id="5ZJS"/>
<dbReference type="PDBsum" id="5ZJT"/>
<dbReference type="SMR" id="P09087"/>
<dbReference type="BioGRID" id="70921">
    <property type="interactions" value="62"/>
</dbReference>
<dbReference type="DIP" id="DIP-19566N"/>
<dbReference type="FunCoup" id="P09087">
    <property type="interactions" value="31"/>
</dbReference>
<dbReference type="IntAct" id="P09087">
    <property type="interactions" value="3"/>
</dbReference>
<dbReference type="STRING" id="7227.FBpp0373669"/>
<dbReference type="PaxDb" id="7227-FBpp0082826"/>
<dbReference type="DNASU" id="47763"/>
<dbReference type="EnsemblMetazoa" id="FBtr0083381">
    <molecule id="P09087-2"/>
    <property type="protein sequence ID" value="FBpp0082823"/>
    <property type="gene ID" value="FBgn0000015"/>
</dbReference>
<dbReference type="EnsemblMetazoa" id="FBtr0083382">
    <molecule id="P09087-2"/>
    <property type="protein sequence ID" value="FBpp0082824"/>
    <property type="gene ID" value="FBgn0000015"/>
</dbReference>
<dbReference type="EnsemblMetazoa" id="FBtr0083383">
    <molecule id="P09087-2"/>
    <property type="protein sequence ID" value="FBpp0082825"/>
    <property type="gene ID" value="FBgn0000015"/>
</dbReference>
<dbReference type="EnsemblMetazoa" id="FBtr0083384">
    <molecule id="P09087-1"/>
    <property type="protein sequence ID" value="FBpp0082826"/>
    <property type="gene ID" value="FBgn0000015"/>
</dbReference>
<dbReference type="EnsemblMetazoa" id="FBtr0083385">
    <molecule id="P09087-2"/>
    <property type="protein sequence ID" value="FBpp0089276"/>
    <property type="gene ID" value="FBgn0000015"/>
</dbReference>
<dbReference type="EnsemblMetazoa" id="FBtr0415463">
    <molecule id="P09087-1"/>
    <property type="protein sequence ID" value="FBpp0373669"/>
    <property type="gene ID" value="FBgn0000015"/>
</dbReference>
<dbReference type="EnsemblMetazoa" id="FBtr0415464">
    <molecule id="P09087-2"/>
    <property type="protein sequence ID" value="FBpp0373670"/>
    <property type="gene ID" value="FBgn0000015"/>
</dbReference>
<dbReference type="EnsemblMetazoa" id="FBtr0415465">
    <molecule id="P09087-2"/>
    <property type="protein sequence ID" value="FBpp0373671"/>
    <property type="gene ID" value="FBgn0000015"/>
</dbReference>
<dbReference type="GeneID" id="47763"/>
<dbReference type="KEGG" id="dme:Dmel_CG11648"/>
<dbReference type="AGR" id="FB:FBgn0000015"/>
<dbReference type="CTD" id="47763"/>
<dbReference type="FlyBase" id="FBgn0000015">
    <property type="gene designation" value="Abd-B"/>
</dbReference>
<dbReference type="VEuPathDB" id="VectorBase:FBgn0000015"/>
<dbReference type="eggNOG" id="KOG0487">
    <property type="taxonomic scope" value="Eukaryota"/>
</dbReference>
<dbReference type="GeneTree" id="ENSGT00940000168206"/>
<dbReference type="HOGENOM" id="CLU_545455_0_0_1"/>
<dbReference type="InParanoid" id="P09087"/>
<dbReference type="OMA" id="APWPYND"/>
<dbReference type="OrthoDB" id="6159439at2759"/>
<dbReference type="PhylomeDB" id="P09087"/>
<dbReference type="SignaLink" id="P09087"/>
<dbReference type="BioGRID-ORCS" id="47763">
    <property type="hits" value="0 hits in 3 CRISPR screens"/>
</dbReference>
<dbReference type="GenomeRNAi" id="47763"/>
<dbReference type="PRO" id="PR:P09087"/>
<dbReference type="Proteomes" id="UP000000803">
    <property type="component" value="Chromosome 3R"/>
</dbReference>
<dbReference type="Bgee" id="FBgn0000015">
    <property type="expression patterns" value="Expressed in male accessory gland secondary cell (Drosophila) in male reproductive gland and 96 other cell types or tissues"/>
</dbReference>
<dbReference type="ExpressionAtlas" id="P09087">
    <property type="expression patterns" value="baseline and differential"/>
</dbReference>
<dbReference type="GO" id="GO:0005634">
    <property type="term" value="C:nucleus"/>
    <property type="evidence" value="ECO:0000314"/>
    <property type="project" value="FlyBase"/>
</dbReference>
<dbReference type="GO" id="GO:0005704">
    <property type="term" value="C:polytene chromosome band"/>
    <property type="evidence" value="ECO:0000314"/>
    <property type="project" value="FlyBase"/>
</dbReference>
<dbReference type="GO" id="GO:0003700">
    <property type="term" value="F:DNA-binding transcription factor activity"/>
    <property type="evidence" value="ECO:0000314"/>
    <property type="project" value="FlyBase"/>
</dbReference>
<dbReference type="GO" id="GO:0000981">
    <property type="term" value="F:DNA-binding transcription factor activity, RNA polymerase II-specific"/>
    <property type="evidence" value="ECO:0000318"/>
    <property type="project" value="GO_Central"/>
</dbReference>
<dbReference type="GO" id="GO:0000978">
    <property type="term" value="F:RNA polymerase II cis-regulatory region sequence-specific DNA binding"/>
    <property type="evidence" value="ECO:0000314"/>
    <property type="project" value="FlyBase"/>
</dbReference>
<dbReference type="GO" id="GO:0000976">
    <property type="term" value="F:transcription cis-regulatory region binding"/>
    <property type="evidence" value="ECO:0000314"/>
    <property type="project" value="FlyBase"/>
</dbReference>
<dbReference type="GO" id="GO:0035225">
    <property type="term" value="P:determination of genital disc primordium"/>
    <property type="evidence" value="ECO:0000315"/>
    <property type="project" value="FlyBase"/>
</dbReference>
<dbReference type="GO" id="GO:0035261">
    <property type="term" value="P:external genitalia morphogenesis"/>
    <property type="evidence" value="ECO:0000315"/>
    <property type="project" value="FlyBase"/>
</dbReference>
<dbReference type="GO" id="GO:0030540">
    <property type="term" value="P:female genitalia development"/>
    <property type="evidence" value="ECO:0000315"/>
    <property type="project" value="FlyBase"/>
</dbReference>
<dbReference type="GO" id="GO:0035224">
    <property type="term" value="P:genital disc anterior/posterior pattern formation"/>
    <property type="evidence" value="ECO:0000270"/>
    <property type="project" value="FlyBase"/>
</dbReference>
<dbReference type="GO" id="GO:0035263">
    <property type="term" value="P:genital disc sexually dimorphic development"/>
    <property type="evidence" value="ECO:0000315"/>
    <property type="project" value="FlyBase"/>
</dbReference>
<dbReference type="GO" id="GO:0008354">
    <property type="term" value="P:germ cell migration"/>
    <property type="evidence" value="ECO:0000315"/>
    <property type="project" value="FlyBase"/>
</dbReference>
<dbReference type="GO" id="GO:0007506">
    <property type="term" value="P:gonadal mesoderm development"/>
    <property type="evidence" value="ECO:0000315"/>
    <property type="project" value="FlyBase"/>
</dbReference>
<dbReference type="GO" id="GO:0007486">
    <property type="term" value="P:imaginal disc-derived female genitalia development"/>
    <property type="evidence" value="ECO:0000315"/>
    <property type="project" value="FlyBase"/>
</dbReference>
<dbReference type="GO" id="GO:0030539">
    <property type="term" value="P:male genitalia development"/>
    <property type="evidence" value="ECO:0000315"/>
    <property type="project" value="FlyBase"/>
</dbReference>
<dbReference type="GO" id="GO:0008584">
    <property type="term" value="P:male gonad development"/>
    <property type="evidence" value="ECO:0000315"/>
    <property type="project" value="FlyBase"/>
</dbReference>
<dbReference type="GO" id="GO:0048094">
    <property type="term" value="P:male pigmentation"/>
    <property type="evidence" value="ECO:0000314"/>
    <property type="project" value="FlyBase"/>
</dbReference>
<dbReference type="GO" id="GO:0007494">
    <property type="term" value="P:midgut development"/>
    <property type="evidence" value="ECO:0000304"/>
    <property type="project" value="FlyBase"/>
</dbReference>
<dbReference type="GO" id="GO:0009997">
    <property type="term" value="P:negative regulation of cardioblast cell fate specification"/>
    <property type="evidence" value="ECO:0000315"/>
    <property type="project" value="FlyBase"/>
</dbReference>
<dbReference type="GO" id="GO:0007621">
    <property type="term" value="P:negative regulation of female receptivity"/>
    <property type="evidence" value="ECO:0000315"/>
    <property type="project" value="FlyBase"/>
</dbReference>
<dbReference type="GO" id="GO:0045705">
    <property type="term" value="P:negative regulation of salivary gland boundary specification"/>
    <property type="evidence" value="ECO:0000304"/>
    <property type="project" value="FlyBase"/>
</dbReference>
<dbReference type="GO" id="GO:0045843">
    <property type="term" value="P:negative regulation of striated muscle tissue development"/>
    <property type="evidence" value="ECO:0000315"/>
    <property type="project" value="FlyBase"/>
</dbReference>
<dbReference type="GO" id="GO:0061101">
    <property type="term" value="P:neuroendocrine cell differentiation"/>
    <property type="evidence" value="ECO:0000315"/>
    <property type="project" value="FlyBase"/>
</dbReference>
<dbReference type="GO" id="GO:0007424">
    <property type="term" value="P:open tracheal system development"/>
    <property type="evidence" value="ECO:0000315"/>
    <property type="project" value="FlyBase"/>
</dbReference>
<dbReference type="GO" id="GO:1902339">
    <property type="term" value="P:positive regulation of apoptotic process involved in morphogenesis"/>
    <property type="evidence" value="ECO:0000315"/>
    <property type="project" value="FlyBase"/>
</dbReference>
<dbReference type="GO" id="GO:0045944">
    <property type="term" value="P:positive regulation of transcription by RNA polymerase II"/>
    <property type="evidence" value="ECO:0000314"/>
    <property type="project" value="FlyBase"/>
</dbReference>
<dbReference type="GO" id="GO:0006357">
    <property type="term" value="P:regulation of transcription by RNA polymerase II"/>
    <property type="evidence" value="ECO:0000318"/>
    <property type="project" value="GO_Central"/>
</dbReference>
<dbReference type="GO" id="GO:0007379">
    <property type="term" value="P:segment specification"/>
    <property type="evidence" value="ECO:0000315"/>
    <property type="project" value="FlyBase"/>
</dbReference>
<dbReference type="GO" id="GO:0007385">
    <property type="term" value="P:specification of segmental identity, abdomen"/>
    <property type="evidence" value="ECO:0000315"/>
    <property type="project" value="FlyBase"/>
</dbReference>
<dbReference type="GO" id="GO:0046693">
    <property type="term" value="P:sperm storage"/>
    <property type="evidence" value="ECO:0000315"/>
    <property type="project" value="FlyBase"/>
</dbReference>
<dbReference type="GO" id="GO:0035277">
    <property type="term" value="P:spiracle morphogenesis, open tracheal system"/>
    <property type="evidence" value="ECO:0000315"/>
    <property type="project" value="FlyBase"/>
</dbReference>
<dbReference type="CDD" id="cd00086">
    <property type="entry name" value="homeodomain"/>
    <property type="match status" value="1"/>
</dbReference>
<dbReference type="FunFam" id="1.10.10.60:FF:000166">
    <property type="entry name" value="homeobox protein Hox-C11"/>
    <property type="match status" value="1"/>
</dbReference>
<dbReference type="Gene3D" id="1.10.10.60">
    <property type="entry name" value="Homeodomain-like"/>
    <property type="match status" value="1"/>
</dbReference>
<dbReference type="InterPro" id="IPR001356">
    <property type="entry name" value="HD"/>
</dbReference>
<dbReference type="InterPro" id="IPR020479">
    <property type="entry name" value="HD_metazoa"/>
</dbReference>
<dbReference type="InterPro" id="IPR017970">
    <property type="entry name" value="Homeobox_CS"/>
</dbReference>
<dbReference type="InterPro" id="IPR009057">
    <property type="entry name" value="Homeodomain-like_sf"/>
</dbReference>
<dbReference type="InterPro" id="IPR046333">
    <property type="entry name" value="HXA10/ABDB-like"/>
</dbReference>
<dbReference type="PANTHER" id="PTHR45874">
    <property type="entry name" value="HOMEOBOX PROTEIN ABDOMINAL-B"/>
    <property type="match status" value="1"/>
</dbReference>
<dbReference type="PANTHER" id="PTHR45874:SF4">
    <property type="entry name" value="HOMEOBOX PROTEIN ABDOMINAL-B"/>
    <property type="match status" value="1"/>
</dbReference>
<dbReference type="Pfam" id="PF00046">
    <property type="entry name" value="Homeodomain"/>
    <property type="match status" value="1"/>
</dbReference>
<dbReference type="PRINTS" id="PR00024">
    <property type="entry name" value="HOMEOBOX"/>
</dbReference>
<dbReference type="SMART" id="SM00389">
    <property type="entry name" value="HOX"/>
    <property type="match status" value="1"/>
</dbReference>
<dbReference type="SUPFAM" id="SSF46689">
    <property type="entry name" value="Homeodomain-like"/>
    <property type="match status" value="1"/>
</dbReference>
<dbReference type="PROSITE" id="PS00027">
    <property type="entry name" value="HOMEOBOX_1"/>
    <property type="match status" value="1"/>
</dbReference>
<dbReference type="PROSITE" id="PS50071">
    <property type="entry name" value="HOMEOBOX_2"/>
    <property type="match status" value="1"/>
</dbReference>
<protein>
    <recommendedName>
        <fullName>Homeobox protein abdominal-B</fullName>
    </recommendedName>
    <alternativeName>
        <fullName>Infraabdominal 7</fullName>
        <shortName>IAB-7</shortName>
    </alternativeName>
    <alternativeName>
        <fullName>P3</fullName>
    </alternativeName>
    <alternativeName>
        <fullName>PH189</fullName>
    </alternativeName>
</protein>
<sequence>MQQHHLQQQQQQQQQQEQQHLQEQQQHLQQLHHHAHHHLPQPLHTTSHHHSAHPHLQQQQQQQQHAVVASSPSSVLQQQQQQSTPTTHSTPTHAVMYEDPPPVPLVAVQQQHLPAPQQQQQLQQQQQQQQQQLATTPVAGALSPAQTPTGPSAQQQQHLTSPHHQQLPQQQTPNSVASGASSNLQQQQQQQNAAVAPGQTQIVAPTTASVSPSSVSSQKEDINMSIQLAPLHIPAIRAGPGFETDTSAAVKRHTAHWAYNDEGFNQHYGSGYYDRKHMFAYPYPETQFPVGQYWGPNYRPDQTTSAAAAAAYMNEAERHVSAAARQSVEGTSTSSYEPPTYSSPGGLRGYPSENYSSSGASGGLSVGAVGPCTPNPGLHEWTGQVSVRKKRKPYSKFQTLELEKEFLFNAYVSKQKRWELARNLQLTERQVKIWFQNRRMKNKKNSQRQANQQNNNNNSSSNHNHAQATQQHHSGHHLNLSLNMGHHAAKMHQ</sequence>
<reference key="1">
    <citation type="journal article" date="1995" name="Proc. Natl. Acad. Sci. U.S.A.">
        <title>Complete sequence of the bithorax complex of Drosophila.</title>
        <authorList>
            <person name="Martin C.H."/>
            <person name="Mayeda C.A."/>
            <person name="Davis C.A."/>
            <person name="Ericsson C.L."/>
            <person name="Knafels J.D."/>
            <person name="Mathog D.R."/>
            <person name="Celniker S.E."/>
            <person name="Lewis E.B."/>
            <person name="Palazzolo M.J."/>
        </authorList>
    </citation>
    <scope>NUCLEOTIDE SEQUENCE [GENOMIC DNA] (ISOFORMS M AND R)</scope>
    <source>
        <strain>Canton-S</strain>
    </source>
</reference>
<reference key="2">
    <citation type="journal article" date="1988" name="EMBO J.">
        <title>Evidence that the Abdominal-B r element function is conferred by a trans-regulatory homeoprotein.</title>
        <authorList>
            <person name="Delorenzi M."/>
            <person name="Ali N."/>
            <person name="Saari G."/>
            <person name="Henry C."/>
            <person name="Wilcox M."/>
            <person name="Bienz M."/>
        </authorList>
    </citation>
    <scope>NUCLEOTIDE SEQUENCE (ISOFORM R)</scope>
    <scope>CHARACTERIZATION</scope>
    <source>
        <tissue>Embryo</tissue>
    </source>
</reference>
<reference key="3">
    <citation type="journal article" date="1989" name="Genes Dev.">
        <title>The molecular genetics of the bithorax complex of Drosophila: characterization of the products of the Abdominal-B domain.</title>
        <authorList>
            <person name="Celniker S.E."/>
            <person name="Keelan D.J."/>
            <person name="Lewis E.B."/>
        </authorList>
    </citation>
    <scope>NUCLEOTIDE SEQUENCE [GENOMIC DNA] (ISOFORM M)</scope>
    <scope>CHARACTERIZATION</scope>
    <source>
        <tissue>Embryo</tissue>
        <tissue>Pupae</tissue>
    </source>
</reference>
<reference key="4">
    <citation type="journal article" date="1989" name="Genes Dev.">
        <title>The morphogenetic and regulatory functions of the Drosophila Abdominal-B gene are encoded in overlapping RNAs transcribed from separate promoters.</title>
        <authorList>
            <person name="Zavortink M."/>
            <person name="Sakonju S."/>
        </authorList>
    </citation>
    <scope>NUCLEOTIDE SEQUENCE [GENOMIC DNA] (ISOFORM M)</scope>
    <source>
        <strain>Canton-S</strain>
        <tissue>Embryo</tissue>
    </source>
</reference>
<reference key="5">
    <citation type="journal article" date="2000" name="Science">
        <title>The genome sequence of Drosophila melanogaster.</title>
        <authorList>
            <person name="Adams M.D."/>
            <person name="Celniker S.E."/>
            <person name="Holt R.A."/>
            <person name="Evans C.A."/>
            <person name="Gocayne J.D."/>
            <person name="Amanatides P.G."/>
            <person name="Scherer S.E."/>
            <person name="Li P.W."/>
            <person name="Hoskins R.A."/>
            <person name="Galle R.F."/>
            <person name="George R.A."/>
            <person name="Lewis S.E."/>
            <person name="Richards S."/>
            <person name="Ashburner M."/>
            <person name="Henderson S.N."/>
            <person name="Sutton G.G."/>
            <person name="Wortman J.R."/>
            <person name="Yandell M.D."/>
            <person name="Zhang Q."/>
            <person name="Chen L.X."/>
            <person name="Brandon R.C."/>
            <person name="Rogers Y.-H.C."/>
            <person name="Blazej R.G."/>
            <person name="Champe M."/>
            <person name="Pfeiffer B.D."/>
            <person name="Wan K.H."/>
            <person name="Doyle C."/>
            <person name="Baxter E.G."/>
            <person name="Helt G."/>
            <person name="Nelson C.R."/>
            <person name="Miklos G.L.G."/>
            <person name="Abril J.F."/>
            <person name="Agbayani A."/>
            <person name="An H.-J."/>
            <person name="Andrews-Pfannkoch C."/>
            <person name="Baldwin D."/>
            <person name="Ballew R.M."/>
            <person name="Basu A."/>
            <person name="Baxendale J."/>
            <person name="Bayraktaroglu L."/>
            <person name="Beasley E.M."/>
            <person name="Beeson K.Y."/>
            <person name="Benos P.V."/>
            <person name="Berman B.P."/>
            <person name="Bhandari D."/>
            <person name="Bolshakov S."/>
            <person name="Borkova D."/>
            <person name="Botchan M.R."/>
            <person name="Bouck J."/>
            <person name="Brokstein P."/>
            <person name="Brottier P."/>
            <person name="Burtis K.C."/>
            <person name="Busam D.A."/>
            <person name="Butler H."/>
            <person name="Cadieu E."/>
            <person name="Center A."/>
            <person name="Chandra I."/>
            <person name="Cherry J.M."/>
            <person name="Cawley S."/>
            <person name="Dahlke C."/>
            <person name="Davenport L.B."/>
            <person name="Davies P."/>
            <person name="de Pablos B."/>
            <person name="Delcher A."/>
            <person name="Deng Z."/>
            <person name="Mays A.D."/>
            <person name="Dew I."/>
            <person name="Dietz S.M."/>
            <person name="Dodson K."/>
            <person name="Doup L.E."/>
            <person name="Downes M."/>
            <person name="Dugan-Rocha S."/>
            <person name="Dunkov B.C."/>
            <person name="Dunn P."/>
            <person name="Durbin K.J."/>
            <person name="Evangelista C.C."/>
            <person name="Ferraz C."/>
            <person name="Ferriera S."/>
            <person name="Fleischmann W."/>
            <person name="Fosler C."/>
            <person name="Gabrielian A.E."/>
            <person name="Garg N.S."/>
            <person name="Gelbart W.M."/>
            <person name="Glasser K."/>
            <person name="Glodek A."/>
            <person name="Gong F."/>
            <person name="Gorrell J.H."/>
            <person name="Gu Z."/>
            <person name="Guan P."/>
            <person name="Harris M."/>
            <person name="Harris N.L."/>
            <person name="Harvey D.A."/>
            <person name="Heiman T.J."/>
            <person name="Hernandez J.R."/>
            <person name="Houck J."/>
            <person name="Hostin D."/>
            <person name="Houston K.A."/>
            <person name="Howland T.J."/>
            <person name="Wei M.-H."/>
            <person name="Ibegwam C."/>
            <person name="Jalali M."/>
            <person name="Kalush F."/>
            <person name="Karpen G.H."/>
            <person name="Ke Z."/>
            <person name="Kennison J.A."/>
            <person name="Ketchum K.A."/>
            <person name="Kimmel B.E."/>
            <person name="Kodira C.D."/>
            <person name="Kraft C.L."/>
            <person name="Kravitz S."/>
            <person name="Kulp D."/>
            <person name="Lai Z."/>
            <person name="Lasko P."/>
            <person name="Lei Y."/>
            <person name="Levitsky A.A."/>
            <person name="Li J.H."/>
            <person name="Li Z."/>
            <person name="Liang Y."/>
            <person name="Lin X."/>
            <person name="Liu X."/>
            <person name="Mattei B."/>
            <person name="McIntosh T.C."/>
            <person name="McLeod M.P."/>
            <person name="McPherson D."/>
            <person name="Merkulov G."/>
            <person name="Milshina N.V."/>
            <person name="Mobarry C."/>
            <person name="Morris J."/>
            <person name="Moshrefi A."/>
            <person name="Mount S.M."/>
            <person name="Moy M."/>
            <person name="Murphy B."/>
            <person name="Murphy L."/>
            <person name="Muzny D.M."/>
            <person name="Nelson D.L."/>
            <person name="Nelson D.R."/>
            <person name="Nelson K.A."/>
            <person name="Nixon K."/>
            <person name="Nusskern D.R."/>
            <person name="Pacleb J.M."/>
            <person name="Palazzolo M."/>
            <person name="Pittman G.S."/>
            <person name="Pan S."/>
            <person name="Pollard J."/>
            <person name="Puri V."/>
            <person name="Reese M.G."/>
            <person name="Reinert K."/>
            <person name="Remington K."/>
            <person name="Saunders R.D.C."/>
            <person name="Scheeler F."/>
            <person name="Shen H."/>
            <person name="Shue B.C."/>
            <person name="Siden-Kiamos I."/>
            <person name="Simpson M."/>
            <person name="Skupski M.P."/>
            <person name="Smith T.J."/>
            <person name="Spier E."/>
            <person name="Spradling A.C."/>
            <person name="Stapleton M."/>
            <person name="Strong R."/>
            <person name="Sun E."/>
            <person name="Svirskas R."/>
            <person name="Tector C."/>
            <person name="Turner R."/>
            <person name="Venter E."/>
            <person name="Wang A.H."/>
            <person name="Wang X."/>
            <person name="Wang Z.-Y."/>
            <person name="Wassarman D.A."/>
            <person name="Weinstock G.M."/>
            <person name="Weissenbach J."/>
            <person name="Williams S.M."/>
            <person name="Woodage T."/>
            <person name="Worley K.C."/>
            <person name="Wu D."/>
            <person name="Yang S."/>
            <person name="Yao Q.A."/>
            <person name="Ye J."/>
            <person name="Yeh R.-F."/>
            <person name="Zaveri J.S."/>
            <person name="Zhan M."/>
            <person name="Zhang G."/>
            <person name="Zhao Q."/>
            <person name="Zheng L."/>
            <person name="Zheng X.H."/>
            <person name="Zhong F.N."/>
            <person name="Zhong W."/>
            <person name="Zhou X."/>
            <person name="Zhu S.C."/>
            <person name="Zhu X."/>
            <person name="Smith H.O."/>
            <person name="Gibbs R.A."/>
            <person name="Myers E.W."/>
            <person name="Rubin G.M."/>
            <person name="Venter J.C."/>
        </authorList>
    </citation>
    <scope>NUCLEOTIDE SEQUENCE [LARGE SCALE GENOMIC DNA] (ISOFORMS M AND R)</scope>
    <source>
        <strain>Berkeley</strain>
    </source>
</reference>
<reference key="6">
    <citation type="journal article" date="2002" name="Genome Biol.">
        <title>Annotation of the Drosophila melanogaster euchromatic genome: a systematic review.</title>
        <authorList>
            <person name="Misra S."/>
            <person name="Crosby M.A."/>
            <person name="Mungall C.J."/>
            <person name="Matthews B.B."/>
            <person name="Campbell K.S."/>
            <person name="Hradecky P."/>
            <person name="Huang Y."/>
            <person name="Kaminker J.S."/>
            <person name="Millburn G.H."/>
            <person name="Prochnik S.E."/>
            <person name="Smith C.D."/>
            <person name="Tupy J.L."/>
            <person name="Whitfield E.J."/>
            <person name="Bayraktaroglu L."/>
            <person name="Berman B.P."/>
            <person name="Bettencourt B.R."/>
            <person name="Celniker S.E."/>
            <person name="de Grey A.D.N.J."/>
            <person name="Drysdale R.A."/>
            <person name="Harris N.L."/>
            <person name="Richter J."/>
            <person name="Russo S."/>
            <person name="Schroeder A.J."/>
            <person name="Shu S.Q."/>
            <person name="Stapleton M."/>
            <person name="Yamada C."/>
            <person name="Ashburner M."/>
            <person name="Gelbart W.M."/>
            <person name="Rubin G.M."/>
            <person name="Lewis S.E."/>
        </authorList>
    </citation>
    <scope>GENOME REANNOTATION</scope>
    <source>
        <strain>Berkeley</strain>
    </source>
</reference>
<reference key="7">
    <citation type="journal article" date="1985" name="Cell">
        <title>Homeo box genes of the Antennapedia and bithorax complexes of Drosophila.</title>
        <authorList>
            <person name="Regulski M."/>
            <person name="Harding K."/>
            <person name="Kostriken R."/>
            <person name="Karch F."/>
            <person name="Levine M."/>
            <person name="McGinnis W."/>
        </authorList>
    </citation>
    <scope>NUCLEOTIDE SEQUENCE [MRNA] OF 387-447</scope>
</reference>
<reference key="8">
    <citation type="journal article" date="1988" name="EMBO J.">
        <title>Different transcripts of the Drosophila Abd-B gene correlate with distinct genetic sub-functions.</title>
        <authorList>
            <person name="Kuziora M.A."/>
            <person name="McGinnis W."/>
        </authorList>
    </citation>
    <scope>ALTERNATIVE SPLICING</scope>
    <scope>TISSUE SPECIFICITY</scope>
    <scope>DEVELOPMENTAL STAGE</scope>
</reference>
<evidence type="ECO:0000255" key="1">
    <source>
        <dbReference type="PROSITE-ProRule" id="PRU00108"/>
    </source>
</evidence>
<evidence type="ECO:0000256" key="2">
    <source>
        <dbReference type="SAM" id="MobiDB-lite"/>
    </source>
</evidence>
<evidence type="ECO:0000269" key="3">
    <source>
    </source>
</evidence>
<evidence type="ECO:0000305" key="4"/>
<evidence type="ECO:0007829" key="5">
    <source>
        <dbReference type="PDB" id="5ZJT"/>
    </source>
</evidence>
<organism>
    <name type="scientific">Drosophila melanogaster</name>
    <name type="common">Fruit fly</name>
    <dbReference type="NCBI Taxonomy" id="7227"/>
    <lineage>
        <taxon>Eukaryota</taxon>
        <taxon>Metazoa</taxon>
        <taxon>Ecdysozoa</taxon>
        <taxon>Arthropoda</taxon>
        <taxon>Hexapoda</taxon>
        <taxon>Insecta</taxon>
        <taxon>Pterygota</taxon>
        <taxon>Neoptera</taxon>
        <taxon>Endopterygota</taxon>
        <taxon>Diptera</taxon>
        <taxon>Brachycera</taxon>
        <taxon>Muscomorpha</taxon>
        <taxon>Ephydroidea</taxon>
        <taxon>Drosophilidae</taxon>
        <taxon>Drosophila</taxon>
        <taxon>Sophophora</taxon>
    </lineage>
</organism>
<feature type="chain" id="PRO_0000200258" description="Homeobox protein abdominal-B">
    <location>
        <begin position="1"/>
        <end position="493"/>
    </location>
</feature>
<feature type="DNA-binding region" description="Homeobox" evidence="1">
    <location>
        <begin position="387"/>
        <end position="446"/>
    </location>
</feature>
<feature type="region of interest" description="Disordered" evidence="2">
    <location>
        <begin position="1"/>
        <end position="199"/>
    </location>
</feature>
<feature type="region of interest" description="Disordered" evidence="2">
    <location>
        <begin position="322"/>
        <end position="360"/>
    </location>
</feature>
<feature type="region of interest" description="Disordered" evidence="2">
    <location>
        <begin position="438"/>
        <end position="475"/>
    </location>
</feature>
<feature type="compositionally biased region" description="Low complexity" evidence="2">
    <location>
        <begin position="1"/>
        <end position="29"/>
    </location>
</feature>
<feature type="compositionally biased region" description="Basic residues" evidence="2">
    <location>
        <begin position="30"/>
        <end position="39"/>
    </location>
</feature>
<feature type="compositionally biased region" description="Low complexity" evidence="2">
    <location>
        <begin position="54"/>
        <end position="95"/>
    </location>
</feature>
<feature type="compositionally biased region" description="Low complexity" evidence="2">
    <location>
        <begin position="105"/>
        <end position="134"/>
    </location>
</feature>
<feature type="compositionally biased region" description="Polar residues" evidence="2">
    <location>
        <begin position="144"/>
        <end position="153"/>
    </location>
</feature>
<feature type="compositionally biased region" description="Low complexity" evidence="2">
    <location>
        <begin position="154"/>
        <end position="173"/>
    </location>
</feature>
<feature type="compositionally biased region" description="Polar residues" evidence="2">
    <location>
        <begin position="174"/>
        <end position="184"/>
    </location>
</feature>
<feature type="compositionally biased region" description="Low complexity" evidence="2">
    <location>
        <begin position="329"/>
        <end position="345"/>
    </location>
</feature>
<feature type="compositionally biased region" description="Low complexity" evidence="2">
    <location>
        <begin position="447"/>
        <end position="475"/>
    </location>
</feature>
<feature type="splice variant" id="VSP_002396" description="In isoform R." evidence="4">
    <location>
        <begin position="1"/>
        <end position="223"/>
    </location>
</feature>
<feature type="sequence conflict" description="In Ref. 4; CAB57859." evidence="4" ref="4">
    <original>Q</original>
    <variation>H</variation>
    <location>
        <position position="15"/>
    </location>
</feature>
<feature type="sequence conflict" description="In Ref. 3; CAA34260." evidence="4" ref="3">
    <location>
        <position position="74"/>
    </location>
</feature>
<feature type="sequence conflict" description="In Ref. 3; CAA34260." evidence="4" ref="3">
    <original>ASGA</original>
    <variation>PVR</variation>
    <location>
        <begin position="177"/>
        <end position="180"/>
    </location>
</feature>
<feature type="sequence conflict" description="In Ref. 3; CAA34260." evidence="4" ref="3">
    <original>ER</original>
    <variation>DG</variation>
    <location>
        <begin position="317"/>
        <end position="318"/>
    </location>
</feature>
<feature type="helix" evidence="5">
    <location>
        <begin position="380"/>
        <end position="382"/>
    </location>
</feature>
<feature type="helix" evidence="5">
    <location>
        <begin position="396"/>
        <end position="408"/>
    </location>
</feature>
<feature type="helix" evidence="5">
    <location>
        <begin position="414"/>
        <end position="423"/>
    </location>
</feature>
<feature type="helix" evidence="5">
    <location>
        <begin position="428"/>
        <end position="444"/>
    </location>
</feature>
<accession>P09087</accession>
<accession>Q9VEQ8</accession>
<accession>Q9VEQ9</accession>
<comment type="function">
    <text>Sequence-specific transcription factor which is part of a developmental regulatory system that provides cells with specific positional identities on the anterior-posterior axis.</text>
</comment>
<comment type="subcellular location">
    <subcellularLocation>
        <location>Nucleus</location>
    </subcellularLocation>
</comment>
<comment type="alternative products">
    <event type="alternative splicing"/>
    <isoform>
        <id>P09087-1</id>
        <name>M</name>
        <name>Morphogenetic</name>
        <name>Abd-BI</name>
        <sequence type="displayed"/>
    </isoform>
    <isoform>
        <id>P09087-2</id>
        <name>R</name>
        <name>Regulatory</name>
        <name>Abd-BII</name>
        <sequence type="described" ref="VSP_002396"/>
    </isoform>
</comment>
<comment type="tissue specificity">
    <text evidence="3">Isoform M and isoform R are expressed in ectodermal and mesodermal tissues and central nervous system of fourth to ninth embryonic abdominal segments. Later in embryogenesis, expression is seen in visceral mesoderm surrounding hindgut and in two Malpighian tubules.</text>
</comment>
<comment type="developmental stage">
    <text evidence="3">Highly expressed during embryogenesis, lower expression in larvae, pupae and adults.</text>
</comment>
<comment type="similarity">
    <text evidence="4">Belongs to the Abd-B homeobox family.</text>
</comment>
<name>ABDB_DROME</name>
<keyword id="KW-0002">3D-structure</keyword>
<keyword id="KW-0025">Alternative splicing</keyword>
<keyword id="KW-0217">Developmental protein</keyword>
<keyword id="KW-0238">DNA-binding</keyword>
<keyword id="KW-0371">Homeobox</keyword>
<keyword id="KW-0539">Nucleus</keyword>
<keyword id="KW-1185">Reference proteome</keyword>
<gene>
    <name type="primary">Abd-B</name>
    <name type="ORF">CG10291</name>
</gene>
<proteinExistence type="evidence at protein level"/>